<protein>
    <recommendedName>
        <fullName evidence="1">Peptide deformylase</fullName>
        <shortName evidence="1">PDF</shortName>
        <ecNumber evidence="1">3.5.1.88</ecNumber>
    </recommendedName>
    <alternativeName>
        <fullName evidence="1">Polypeptide deformylase</fullName>
    </alternativeName>
</protein>
<name>DEF_SYNWW</name>
<proteinExistence type="inferred from homology"/>
<sequence length="152" mass="16598">MSVYQVITVPNDILRGKALPVKEINAGVLRVLDNMRDTMYAADGVGLAAPQIGIPKRMIVVDIGENLLELINPEILKQEGNQLGSEGCLSVPGIVGRVNRAKKVLVKGLDRNGQELNFAAVDLLAKVLQHEIDHLEGILFIDKAIETRIEKL</sequence>
<feature type="chain" id="PRO_0000301119" description="Peptide deformylase">
    <location>
        <begin position="1"/>
        <end position="152"/>
    </location>
</feature>
<feature type="active site" evidence="1">
    <location>
        <position position="131"/>
    </location>
</feature>
<feature type="binding site" evidence="1">
    <location>
        <position position="88"/>
    </location>
    <ligand>
        <name>Fe cation</name>
        <dbReference type="ChEBI" id="CHEBI:24875"/>
    </ligand>
</feature>
<feature type="binding site" evidence="1">
    <location>
        <position position="130"/>
    </location>
    <ligand>
        <name>Fe cation</name>
        <dbReference type="ChEBI" id="CHEBI:24875"/>
    </ligand>
</feature>
<feature type="binding site" evidence="1">
    <location>
        <position position="134"/>
    </location>
    <ligand>
        <name>Fe cation</name>
        <dbReference type="ChEBI" id="CHEBI:24875"/>
    </ligand>
</feature>
<evidence type="ECO:0000255" key="1">
    <source>
        <dbReference type="HAMAP-Rule" id="MF_00163"/>
    </source>
</evidence>
<reference key="1">
    <citation type="journal article" date="2010" name="Environ. Microbiol.">
        <title>The genome of Syntrophomonas wolfei: new insights into syntrophic metabolism and biohydrogen production.</title>
        <authorList>
            <person name="Sieber J.R."/>
            <person name="Sims D.R."/>
            <person name="Han C."/>
            <person name="Kim E."/>
            <person name="Lykidis A."/>
            <person name="Lapidus A.L."/>
            <person name="McDonnald E."/>
            <person name="Rohlin L."/>
            <person name="Culley D.E."/>
            <person name="Gunsalus R."/>
            <person name="McInerney M.J."/>
        </authorList>
    </citation>
    <scope>NUCLEOTIDE SEQUENCE [LARGE SCALE GENOMIC DNA]</scope>
    <source>
        <strain>DSM 2245B / Goettingen</strain>
    </source>
</reference>
<keyword id="KW-0378">Hydrolase</keyword>
<keyword id="KW-0408">Iron</keyword>
<keyword id="KW-0479">Metal-binding</keyword>
<keyword id="KW-0648">Protein biosynthesis</keyword>
<keyword id="KW-1185">Reference proteome</keyword>
<organism>
    <name type="scientific">Syntrophomonas wolfei subsp. wolfei (strain DSM 2245B / Goettingen)</name>
    <dbReference type="NCBI Taxonomy" id="335541"/>
    <lineage>
        <taxon>Bacteria</taxon>
        <taxon>Bacillati</taxon>
        <taxon>Bacillota</taxon>
        <taxon>Clostridia</taxon>
        <taxon>Eubacteriales</taxon>
        <taxon>Syntrophomonadaceae</taxon>
        <taxon>Syntrophomonas</taxon>
    </lineage>
</organism>
<comment type="function">
    <text evidence="1">Removes the formyl group from the N-terminal Met of newly synthesized proteins. Requires at least a dipeptide for an efficient rate of reaction. N-terminal L-methionine is a prerequisite for activity but the enzyme has broad specificity at other positions.</text>
</comment>
<comment type="catalytic activity">
    <reaction evidence="1">
        <text>N-terminal N-formyl-L-methionyl-[peptide] + H2O = N-terminal L-methionyl-[peptide] + formate</text>
        <dbReference type="Rhea" id="RHEA:24420"/>
        <dbReference type="Rhea" id="RHEA-COMP:10639"/>
        <dbReference type="Rhea" id="RHEA-COMP:10640"/>
        <dbReference type="ChEBI" id="CHEBI:15377"/>
        <dbReference type="ChEBI" id="CHEBI:15740"/>
        <dbReference type="ChEBI" id="CHEBI:49298"/>
        <dbReference type="ChEBI" id="CHEBI:64731"/>
        <dbReference type="EC" id="3.5.1.88"/>
    </reaction>
</comment>
<comment type="cofactor">
    <cofactor evidence="1">
        <name>Fe(2+)</name>
        <dbReference type="ChEBI" id="CHEBI:29033"/>
    </cofactor>
    <text evidence="1">Binds 1 Fe(2+) ion.</text>
</comment>
<comment type="similarity">
    <text evidence="1">Belongs to the polypeptide deformylase family.</text>
</comment>
<dbReference type="EC" id="3.5.1.88" evidence="1"/>
<dbReference type="EMBL" id="CP000448">
    <property type="protein sequence ID" value="ABI68541.1"/>
    <property type="molecule type" value="Genomic_DNA"/>
</dbReference>
<dbReference type="RefSeq" id="WP_011640644.1">
    <property type="nucleotide sequence ID" value="NC_008346.1"/>
</dbReference>
<dbReference type="SMR" id="Q0AXL3"/>
<dbReference type="STRING" id="335541.Swol_1232"/>
<dbReference type="KEGG" id="swo:Swol_1232"/>
<dbReference type="eggNOG" id="COG0242">
    <property type="taxonomic scope" value="Bacteria"/>
</dbReference>
<dbReference type="HOGENOM" id="CLU_061901_4_2_9"/>
<dbReference type="OrthoDB" id="9784988at2"/>
<dbReference type="Proteomes" id="UP000001968">
    <property type="component" value="Chromosome"/>
</dbReference>
<dbReference type="GO" id="GO:0046872">
    <property type="term" value="F:metal ion binding"/>
    <property type="evidence" value="ECO:0007669"/>
    <property type="project" value="UniProtKB-KW"/>
</dbReference>
<dbReference type="GO" id="GO:0042586">
    <property type="term" value="F:peptide deformylase activity"/>
    <property type="evidence" value="ECO:0007669"/>
    <property type="project" value="UniProtKB-UniRule"/>
</dbReference>
<dbReference type="GO" id="GO:0043686">
    <property type="term" value="P:co-translational protein modification"/>
    <property type="evidence" value="ECO:0007669"/>
    <property type="project" value="TreeGrafter"/>
</dbReference>
<dbReference type="GO" id="GO:0006412">
    <property type="term" value="P:translation"/>
    <property type="evidence" value="ECO:0007669"/>
    <property type="project" value="UniProtKB-UniRule"/>
</dbReference>
<dbReference type="CDD" id="cd00487">
    <property type="entry name" value="Pep_deformylase"/>
    <property type="match status" value="1"/>
</dbReference>
<dbReference type="Gene3D" id="3.90.45.10">
    <property type="entry name" value="Peptide deformylase"/>
    <property type="match status" value="1"/>
</dbReference>
<dbReference type="HAMAP" id="MF_00163">
    <property type="entry name" value="Pep_deformylase"/>
    <property type="match status" value="1"/>
</dbReference>
<dbReference type="InterPro" id="IPR023635">
    <property type="entry name" value="Peptide_deformylase"/>
</dbReference>
<dbReference type="InterPro" id="IPR036821">
    <property type="entry name" value="Peptide_deformylase_sf"/>
</dbReference>
<dbReference type="NCBIfam" id="TIGR00079">
    <property type="entry name" value="pept_deformyl"/>
    <property type="match status" value="1"/>
</dbReference>
<dbReference type="NCBIfam" id="NF001159">
    <property type="entry name" value="PRK00150.1-3"/>
    <property type="match status" value="1"/>
</dbReference>
<dbReference type="PANTHER" id="PTHR10458">
    <property type="entry name" value="PEPTIDE DEFORMYLASE"/>
    <property type="match status" value="1"/>
</dbReference>
<dbReference type="PANTHER" id="PTHR10458:SF22">
    <property type="entry name" value="PEPTIDE DEFORMYLASE"/>
    <property type="match status" value="1"/>
</dbReference>
<dbReference type="Pfam" id="PF01327">
    <property type="entry name" value="Pep_deformylase"/>
    <property type="match status" value="1"/>
</dbReference>
<dbReference type="PIRSF" id="PIRSF004749">
    <property type="entry name" value="Pep_def"/>
    <property type="match status" value="1"/>
</dbReference>
<dbReference type="PRINTS" id="PR01576">
    <property type="entry name" value="PDEFORMYLASE"/>
</dbReference>
<dbReference type="SUPFAM" id="SSF56420">
    <property type="entry name" value="Peptide deformylase"/>
    <property type="match status" value="1"/>
</dbReference>
<accession>Q0AXL3</accession>
<gene>
    <name evidence="1" type="primary">def</name>
    <name type="ordered locus">Swol_1232</name>
</gene>